<protein>
    <recommendedName>
        <fullName>Interferon gamma</fullName>
        <shortName>IFN-gamma</shortName>
    </recommendedName>
    <alternativeName>
        <fullName>Immune interferon</fullName>
    </alternativeName>
</protein>
<accession>P01579</accession>
<accession>B5BU88</accession>
<accession>Q53ZV4</accession>
<keyword id="KW-0002">3D-structure</keyword>
<keyword id="KW-0051">Antiviral defense</keyword>
<keyword id="KW-0165">Cleavage on pair of basic residues</keyword>
<keyword id="KW-0202">Cytokine</keyword>
<keyword id="KW-0903">Direct protein sequencing</keyword>
<keyword id="KW-0325">Glycoprotein</keyword>
<keyword id="KW-0341">Growth regulation</keyword>
<keyword id="KW-0582">Pharmaceutical</keyword>
<keyword id="KW-1267">Proteomics identification</keyword>
<keyword id="KW-0873">Pyrrolidone carboxylic acid</keyword>
<keyword id="KW-1185">Reference proteome</keyword>
<keyword id="KW-0964">Secreted</keyword>
<keyword id="KW-0732">Signal</keyword>
<gene>
    <name type="primary">IFNG</name>
</gene>
<organism>
    <name type="scientific">Homo sapiens</name>
    <name type="common">Human</name>
    <dbReference type="NCBI Taxonomy" id="9606"/>
    <lineage>
        <taxon>Eukaryota</taxon>
        <taxon>Metazoa</taxon>
        <taxon>Chordata</taxon>
        <taxon>Craniata</taxon>
        <taxon>Vertebrata</taxon>
        <taxon>Euteleostomi</taxon>
        <taxon>Mammalia</taxon>
        <taxon>Eutheria</taxon>
        <taxon>Euarchontoglires</taxon>
        <taxon>Primates</taxon>
        <taxon>Haplorrhini</taxon>
        <taxon>Catarrhini</taxon>
        <taxon>Hominidae</taxon>
        <taxon>Homo</taxon>
    </lineage>
</organism>
<name>IFNG_HUMAN</name>
<dbReference type="EMBL" id="X13274">
    <property type="protein sequence ID" value="CAA31639.1"/>
    <property type="molecule type" value="mRNA"/>
</dbReference>
<dbReference type="EMBL" id="J00219">
    <property type="protein sequence ID" value="AAB59534.1"/>
    <property type="molecule type" value="Genomic_DNA"/>
</dbReference>
<dbReference type="EMBL" id="X01992">
    <property type="protein sequence ID" value="CAA26022.1"/>
    <property type="molecule type" value="mRNA"/>
</dbReference>
<dbReference type="EMBL" id="V00543">
    <property type="protein sequence ID" value="CAA23804.1"/>
    <property type="molecule type" value="mRNA"/>
</dbReference>
<dbReference type="EMBL" id="AY255837">
    <property type="protein sequence ID" value="AAP20098.1"/>
    <property type="molecule type" value="mRNA"/>
</dbReference>
<dbReference type="EMBL" id="AF375790">
    <property type="protein sequence ID" value="AAK53058.1"/>
    <property type="molecule type" value="Genomic_DNA"/>
</dbReference>
<dbReference type="EMBL" id="AB451324">
    <property type="protein sequence ID" value="BAG70138.1"/>
    <property type="molecule type" value="mRNA"/>
</dbReference>
<dbReference type="EMBL" id="AB451453">
    <property type="protein sequence ID" value="BAG70267.1"/>
    <property type="molecule type" value="mRNA"/>
</dbReference>
<dbReference type="EMBL" id="CH471054">
    <property type="protein sequence ID" value="EAW97180.1"/>
    <property type="molecule type" value="Genomic_DNA"/>
</dbReference>
<dbReference type="EMBL" id="BC070256">
    <property type="protein sequence ID" value="AAH70256.1"/>
    <property type="molecule type" value="mRNA"/>
</dbReference>
<dbReference type="CCDS" id="CCDS8980.1"/>
<dbReference type="PIR" id="A93284">
    <property type="entry name" value="IVHUG"/>
</dbReference>
<dbReference type="RefSeq" id="NP_000610.2">
    <property type="nucleotide sequence ID" value="NM_000619.3"/>
</dbReference>
<dbReference type="PDB" id="1EKU">
    <property type="method" value="X-ray"/>
    <property type="resolution" value="2.90 A"/>
    <property type="chains" value="A/B=26-161"/>
</dbReference>
<dbReference type="PDB" id="1FG9">
    <property type="method" value="X-ray"/>
    <property type="resolution" value="2.90 A"/>
    <property type="chains" value="A/B=24-156"/>
</dbReference>
<dbReference type="PDB" id="1FYH">
    <property type="method" value="X-ray"/>
    <property type="resolution" value="2.04 A"/>
    <property type="chains" value="A/D=28-156"/>
</dbReference>
<dbReference type="PDB" id="1HIG">
    <property type="method" value="X-ray"/>
    <property type="resolution" value="3.50 A"/>
    <property type="chains" value="A/B/C/D=24-161"/>
</dbReference>
<dbReference type="PDB" id="3BES">
    <property type="method" value="X-ray"/>
    <property type="resolution" value="2.20 A"/>
    <property type="chains" value="L=24-161"/>
</dbReference>
<dbReference type="PDB" id="6E3K">
    <property type="method" value="X-ray"/>
    <property type="resolution" value="3.25 A"/>
    <property type="chains" value="A/B=24-156"/>
</dbReference>
<dbReference type="PDB" id="6E3L">
    <property type="method" value="X-ray"/>
    <property type="resolution" value="3.80 A"/>
    <property type="chains" value="A/B=24-156"/>
</dbReference>
<dbReference type="PDBsum" id="1EKU"/>
<dbReference type="PDBsum" id="1FG9"/>
<dbReference type="PDBsum" id="1FYH"/>
<dbReference type="PDBsum" id="1HIG"/>
<dbReference type="PDBsum" id="3BES"/>
<dbReference type="PDBsum" id="6E3K"/>
<dbReference type="PDBsum" id="6E3L"/>
<dbReference type="SMR" id="P01579"/>
<dbReference type="BioGRID" id="109680">
    <property type="interactions" value="24"/>
</dbReference>
<dbReference type="ComplexPortal" id="CPX-6024">
    <property type="entry name" value="Interferon gamma complex"/>
</dbReference>
<dbReference type="CORUM" id="P01579"/>
<dbReference type="DIP" id="DIP-483N"/>
<dbReference type="FunCoup" id="P01579">
    <property type="interactions" value="913"/>
</dbReference>
<dbReference type="IntAct" id="P01579">
    <property type="interactions" value="17"/>
</dbReference>
<dbReference type="STRING" id="9606.ENSP00000229135"/>
<dbReference type="BindingDB" id="P01579"/>
<dbReference type="ChEMBL" id="CHEMBL3286073"/>
<dbReference type="DrugBank" id="DB14724">
    <property type="generic name" value="Emapalumab"/>
</dbReference>
<dbReference type="DrugBank" id="DB05111">
    <property type="generic name" value="Fontolizumab"/>
</dbReference>
<dbReference type="DrugBank" id="DB10770">
    <property type="generic name" value="Foreskin fibroblast (neonatal)"/>
</dbReference>
<dbReference type="DrugBank" id="DB10772">
    <property type="generic name" value="Foreskin keratinocyte (neonatal)"/>
</dbReference>
<dbReference type="DrugBank" id="DB01677">
    <property type="generic name" value="Fumaric acid"/>
</dbReference>
<dbReference type="DrugBank" id="DB01296">
    <property type="generic name" value="Glucosamine"/>
</dbReference>
<dbReference type="DrugBank" id="DB17892">
    <property type="generic name" value="TAK-603"/>
</dbReference>
<dbReference type="DrugBank" id="DB05110">
    <property type="generic name" value="VIR201"/>
</dbReference>
<dbReference type="DrugCentral" id="P01579"/>
<dbReference type="GlyConnect" id="287">
    <property type="glycosylation" value="23 N-Linked glycans"/>
</dbReference>
<dbReference type="GlyCosmos" id="P01579">
    <property type="glycosylation" value="2 sites, 41 glycans"/>
</dbReference>
<dbReference type="GlyGen" id="P01579">
    <property type="glycosylation" value="5 sites, 41 N-linked glycans (1 site)"/>
</dbReference>
<dbReference type="iPTMnet" id="P01579"/>
<dbReference type="PhosphoSitePlus" id="P01579"/>
<dbReference type="BioMuta" id="IFNG"/>
<dbReference type="DMDM" id="124479"/>
<dbReference type="MassIVE" id="P01579"/>
<dbReference type="PaxDb" id="9606-ENSP00000229135"/>
<dbReference type="PeptideAtlas" id="P01579"/>
<dbReference type="ABCD" id="P01579">
    <property type="antibodies" value="39 sequenced antibodies"/>
</dbReference>
<dbReference type="Antibodypedia" id="4154">
    <property type="antibodies" value="3520 antibodies from 51 providers"/>
</dbReference>
<dbReference type="DNASU" id="3458"/>
<dbReference type="Ensembl" id="ENST00000229135.4">
    <property type="protein sequence ID" value="ENSP00000229135.3"/>
    <property type="gene ID" value="ENSG00000111537.5"/>
</dbReference>
<dbReference type="GeneID" id="3458"/>
<dbReference type="KEGG" id="hsa:3458"/>
<dbReference type="MANE-Select" id="ENST00000229135.4">
    <property type="protein sequence ID" value="ENSP00000229135.3"/>
    <property type="RefSeq nucleotide sequence ID" value="NM_000619.3"/>
    <property type="RefSeq protein sequence ID" value="NP_000610.2"/>
</dbReference>
<dbReference type="UCSC" id="uc001stw.2">
    <property type="organism name" value="human"/>
</dbReference>
<dbReference type="AGR" id="HGNC:5438"/>
<dbReference type="CTD" id="3458"/>
<dbReference type="DisGeNET" id="3458"/>
<dbReference type="GeneCards" id="IFNG"/>
<dbReference type="HGNC" id="HGNC:5438">
    <property type="gene designation" value="IFNG"/>
</dbReference>
<dbReference type="HPA" id="ENSG00000111537">
    <property type="expression patterns" value="Group enriched (bone marrow, lymphoid tissue)"/>
</dbReference>
<dbReference type="MalaCards" id="IFNG"/>
<dbReference type="MIM" id="147570">
    <property type="type" value="gene"/>
</dbReference>
<dbReference type="MIM" id="609135">
    <property type="type" value="phenotype"/>
</dbReference>
<dbReference type="MIM" id="618963">
    <property type="type" value="phenotype"/>
</dbReference>
<dbReference type="neXtProt" id="NX_P01579"/>
<dbReference type="OpenTargets" id="ENSG00000111537"/>
<dbReference type="Orphanet" id="88">
    <property type="disease" value="Idiopathic aplastic anemia"/>
</dbReference>
<dbReference type="Orphanet" id="686447">
    <property type="disease" value="IFNG-responsive severe mendelian susceptibility to mycobacterial diseases"/>
</dbReference>
<dbReference type="Orphanet" id="805">
    <property type="disease" value="Tuberous sclerosis complex"/>
</dbReference>
<dbReference type="PharmGKB" id="PA29674"/>
<dbReference type="VEuPathDB" id="HostDB:ENSG00000111537"/>
<dbReference type="eggNOG" id="ENOG502SBGW">
    <property type="taxonomic scope" value="Eukaryota"/>
</dbReference>
<dbReference type="GeneTree" id="ENSGT00390000007831"/>
<dbReference type="HOGENOM" id="CLU_135106_0_0_1"/>
<dbReference type="InParanoid" id="P01579"/>
<dbReference type="OMA" id="QIVSMYL"/>
<dbReference type="OrthoDB" id="9937106at2759"/>
<dbReference type="PAN-GO" id="P01579">
    <property type="GO annotations" value="4 GO annotations based on evolutionary models"/>
</dbReference>
<dbReference type="PhylomeDB" id="P01579"/>
<dbReference type="TreeFam" id="TF336308"/>
<dbReference type="PathwayCommons" id="P01579"/>
<dbReference type="Reactome" id="R-HSA-877300">
    <property type="pathway name" value="Interferon gamma signaling"/>
</dbReference>
<dbReference type="Reactome" id="R-HSA-877312">
    <property type="pathway name" value="Regulation of IFNG signaling"/>
</dbReference>
<dbReference type="Reactome" id="R-HSA-8877330">
    <property type="pathway name" value="RUNX1 and FOXP3 control the development of regulatory T lymphocytes (Tregs)"/>
</dbReference>
<dbReference type="Reactome" id="R-HSA-8950505">
    <property type="pathway name" value="Gene and protein expression by JAK-STAT signaling after Interleukin-12 stimulation"/>
</dbReference>
<dbReference type="Reactome" id="R-HSA-9732724">
    <property type="pathway name" value="IFNG signaling activates MAPKs"/>
</dbReference>
<dbReference type="SignaLink" id="P01579"/>
<dbReference type="SIGNOR" id="P01579"/>
<dbReference type="BioGRID-ORCS" id="3458">
    <property type="hits" value="9 hits in 1124 CRISPR screens"/>
</dbReference>
<dbReference type="EvolutionaryTrace" id="P01579"/>
<dbReference type="GeneWiki" id="Interferon-gamma"/>
<dbReference type="GenomeRNAi" id="3458"/>
<dbReference type="Pharos" id="P01579">
    <property type="development level" value="Tclin"/>
</dbReference>
<dbReference type="PRO" id="PR:P01579"/>
<dbReference type="Proteomes" id="UP000005640">
    <property type="component" value="Chromosome 12"/>
</dbReference>
<dbReference type="RNAct" id="P01579">
    <property type="molecule type" value="protein"/>
</dbReference>
<dbReference type="Bgee" id="ENSG00000111537">
    <property type="expression patterns" value="Expressed in male germ line stem cell (sensu Vertebrata) in testis and 97 other cell types or tissues"/>
</dbReference>
<dbReference type="GO" id="GO:0005576">
    <property type="term" value="C:extracellular region"/>
    <property type="evidence" value="ECO:0000314"/>
    <property type="project" value="BHF-UCL"/>
</dbReference>
<dbReference type="GO" id="GO:0005615">
    <property type="term" value="C:extracellular space"/>
    <property type="evidence" value="ECO:0000314"/>
    <property type="project" value="UniProt"/>
</dbReference>
<dbReference type="GO" id="GO:0005125">
    <property type="term" value="F:cytokine activity"/>
    <property type="evidence" value="ECO:0000314"/>
    <property type="project" value="UniProt"/>
</dbReference>
<dbReference type="GO" id="GO:0005133">
    <property type="term" value="F:type II interferon receptor binding"/>
    <property type="evidence" value="ECO:0000304"/>
    <property type="project" value="ProtInc"/>
</dbReference>
<dbReference type="GO" id="GO:0002250">
    <property type="term" value="P:adaptive immune response"/>
    <property type="evidence" value="ECO:0000318"/>
    <property type="project" value="GO_Central"/>
</dbReference>
<dbReference type="GO" id="GO:0006915">
    <property type="term" value="P:apoptotic process"/>
    <property type="evidence" value="ECO:0000316"/>
    <property type="project" value="MGI"/>
</dbReference>
<dbReference type="GO" id="GO:0048143">
    <property type="term" value="P:astrocyte activation"/>
    <property type="evidence" value="ECO:0000314"/>
    <property type="project" value="ARUK-UCL"/>
</dbReference>
<dbReference type="GO" id="GO:0007166">
    <property type="term" value="P:cell surface receptor signaling pathway"/>
    <property type="evidence" value="ECO:0000304"/>
    <property type="project" value="ProtInc"/>
</dbReference>
<dbReference type="GO" id="GO:0007259">
    <property type="term" value="P:cell surface receptor signaling pathway via JAK-STAT"/>
    <property type="evidence" value="ECO:0000250"/>
    <property type="project" value="ARUK-UCL"/>
</dbReference>
<dbReference type="GO" id="GO:0097696">
    <property type="term" value="P:cell surface receptor signaling pathway via STAT"/>
    <property type="evidence" value="ECO:0000314"/>
    <property type="project" value="BHF-UCL"/>
</dbReference>
<dbReference type="GO" id="GO:0098586">
    <property type="term" value="P:cellular response to virus"/>
    <property type="evidence" value="ECO:0000303"/>
    <property type="project" value="ComplexPortal"/>
</dbReference>
<dbReference type="GO" id="GO:0051607">
    <property type="term" value="P:defense response to virus"/>
    <property type="evidence" value="ECO:0007669"/>
    <property type="project" value="UniProtKB-KW"/>
</dbReference>
<dbReference type="GO" id="GO:0097191">
    <property type="term" value="P:extrinsic apoptotic signaling pathway"/>
    <property type="evidence" value="ECO:0000314"/>
    <property type="project" value="BHF-UCL"/>
</dbReference>
<dbReference type="GO" id="GO:0038096">
    <property type="term" value="P:Fc-gamma receptor signaling pathway involved in phagocytosis"/>
    <property type="evidence" value="ECO:0000314"/>
    <property type="project" value="BHF-UCL"/>
</dbReference>
<dbReference type="GO" id="GO:0006959">
    <property type="term" value="P:humoral immune response"/>
    <property type="evidence" value="ECO:0000318"/>
    <property type="project" value="GO_Central"/>
</dbReference>
<dbReference type="GO" id="GO:0002281">
    <property type="term" value="P:macrophage activation involved in immune response"/>
    <property type="evidence" value="ECO:0000314"/>
    <property type="project" value="ARUK-UCL"/>
</dbReference>
<dbReference type="GO" id="GO:0030225">
    <property type="term" value="P:macrophage differentiation"/>
    <property type="evidence" value="ECO:0000314"/>
    <property type="project" value="ARUK-UCL"/>
</dbReference>
<dbReference type="GO" id="GO:0001774">
    <property type="term" value="P:microglial cell activation"/>
    <property type="evidence" value="ECO:0000316"/>
    <property type="project" value="ARUK-UCL"/>
</dbReference>
<dbReference type="GO" id="GO:1900222">
    <property type="term" value="P:negative regulation of amyloid-beta clearance"/>
    <property type="evidence" value="ECO:0000250"/>
    <property type="project" value="ARUK-UCL"/>
</dbReference>
<dbReference type="GO" id="GO:0045892">
    <property type="term" value="P:negative regulation of DNA-templated transcription"/>
    <property type="evidence" value="ECO:0000314"/>
    <property type="project" value="CAFA"/>
</dbReference>
<dbReference type="GO" id="GO:0030857">
    <property type="term" value="P:negative regulation of epithelial cell differentiation"/>
    <property type="evidence" value="ECO:0000250"/>
    <property type="project" value="BHF-UCL"/>
</dbReference>
<dbReference type="GO" id="GO:0010629">
    <property type="term" value="P:negative regulation of gene expression"/>
    <property type="evidence" value="ECO:0000314"/>
    <property type="project" value="UniProtKB"/>
</dbReference>
<dbReference type="GO" id="GO:0032700">
    <property type="term" value="P:negative regulation of interleukin-17 production"/>
    <property type="evidence" value="ECO:0000314"/>
    <property type="project" value="BHF-UCL"/>
</dbReference>
<dbReference type="GO" id="GO:0048662">
    <property type="term" value="P:negative regulation of smooth muscle cell proliferation"/>
    <property type="evidence" value="ECO:0000314"/>
    <property type="project" value="BHF-UCL"/>
</dbReference>
<dbReference type="GO" id="GO:0000122">
    <property type="term" value="P:negative regulation of transcription by RNA polymerase II"/>
    <property type="evidence" value="ECO:0000250"/>
    <property type="project" value="BHF-UCL"/>
</dbReference>
<dbReference type="GO" id="GO:0150076">
    <property type="term" value="P:neuroinflammatory response"/>
    <property type="evidence" value="ECO:0000250"/>
    <property type="project" value="ARUK-UCL"/>
</dbReference>
<dbReference type="GO" id="GO:1902004">
    <property type="term" value="P:positive regulation of amyloid-beta formation"/>
    <property type="evidence" value="ECO:0000316"/>
    <property type="project" value="ARUK-UCL"/>
</dbReference>
<dbReference type="GO" id="GO:0010508">
    <property type="term" value="P:positive regulation of autophagy"/>
    <property type="evidence" value="ECO:0000314"/>
    <property type="project" value="UniProtKB"/>
</dbReference>
<dbReference type="GO" id="GO:0060559">
    <property type="term" value="P:positive regulation of calcidiol 1-monooxygenase activity"/>
    <property type="evidence" value="ECO:0000314"/>
    <property type="project" value="BHF-UCL"/>
</dbReference>
<dbReference type="GO" id="GO:0032834">
    <property type="term" value="P:positive regulation of CD4-positive, CD25-positive, alpha-beta regulatory T cell differentiation involved in immune response"/>
    <property type="evidence" value="ECO:0000314"/>
    <property type="project" value="UniProtKB"/>
</dbReference>
<dbReference type="GO" id="GO:0008284">
    <property type="term" value="P:positive regulation of cell population proliferation"/>
    <property type="evidence" value="ECO:0000250"/>
    <property type="project" value="BHF-UCL"/>
</dbReference>
<dbReference type="GO" id="GO:1901857">
    <property type="term" value="P:positive regulation of cellular respiration"/>
    <property type="evidence" value="ECO:0000250"/>
    <property type="project" value="ARUK-UCL"/>
</dbReference>
<dbReference type="GO" id="GO:0032722">
    <property type="term" value="P:positive regulation of chemokine production"/>
    <property type="evidence" value="ECO:0000314"/>
    <property type="project" value="ARUK-UCL"/>
</dbReference>
<dbReference type="GO" id="GO:1904798">
    <property type="term" value="P:positive regulation of core promoter binding"/>
    <property type="evidence" value="ECO:0000314"/>
    <property type="project" value="CAFA"/>
</dbReference>
<dbReference type="GO" id="GO:0001819">
    <property type="term" value="P:positive regulation of cytokine production"/>
    <property type="evidence" value="ECO:0000314"/>
    <property type="project" value="ARUK-UCL"/>
</dbReference>
<dbReference type="GO" id="GO:0010634">
    <property type="term" value="P:positive regulation of epithelial cell migration"/>
    <property type="evidence" value="ECO:0000314"/>
    <property type="project" value="CACAO"/>
</dbReference>
<dbReference type="GO" id="GO:1903543">
    <property type="term" value="P:positive regulation of exosomal secretion"/>
    <property type="evidence" value="ECO:0007005"/>
    <property type="project" value="UniProtKB"/>
</dbReference>
<dbReference type="GO" id="GO:0060550">
    <property type="term" value="P:positive regulation of fructose 1,6-bisphosphate 1-phosphatase activity"/>
    <property type="evidence" value="ECO:0000314"/>
    <property type="project" value="BHF-UCL"/>
</dbReference>
<dbReference type="GO" id="GO:0060552">
    <property type="term" value="P:positive regulation of fructose 1,6-bisphosphate metabolic process"/>
    <property type="evidence" value="ECO:0000314"/>
    <property type="project" value="BHF-UCL"/>
</dbReference>
<dbReference type="GO" id="GO:0010628">
    <property type="term" value="P:positive regulation of gene expression"/>
    <property type="evidence" value="ECO:0000314"/>
    <property type="project" value="UniProtKB"/>
</dbReference>
<dbReference type="GO" id="GO:1900451">
    <property type="term" value="P:positive regulation of glutamate receptor signaling pathway"/>
    <property type="evidence" value="ECO:0000250"/>
    <property type="project" value="ARUK-UCL"/>
</dbReference>
<dbReference type="GO" id="GO:0045821">
    <property type="term" value="P:positive regulation of glycolytic process"/>
    <property type="evidence" value="ECO:0000250"/>
    <property type="project" value="ARUK-UCL"/>
</dbReference>
<dbReference type="GO" id="GO:0050729">
    <property type="term" value="P:positive regulation of inflammatory response"/>
    <property type="evidence" value="ECO:0000314"/>
    <property type="project" value="ARUK-UCL"/>
</dbReference>
<dbReference type="GO" id="GO:0032731">
    <property type="term" value="P:positive regulation of interleukin-1 beta production"/>
    <property type="evidence" value="ECO:0000250"/>
    <property type="project" value="ARUK-UCL"/>
</dbReference>
<dbReference type="GO" id="GO:0032735">
    <property type="term" value="P:positive regulation of interleukin-12 production"/>
    <property type="evidence" value="ECO:0000314"/>
    <property type="project" value="UniProtKB"/>
</dbReference>
<dbReference type="GO" id="GO:0032747">
    <property type="term" value="P:positive regulation of interleukin-23 production"/>
    <property type="evidence" value="ECO:0000314"/>
    <property type="project" value="BHF-UCL"/>
</dbReference>
<dbReference type="GO" id="GO:0032755">
    <property type="term" value="P:positive regulation of interleukin-6 production"/>
    <property type="evidence" value="ECO:0000314"/>
    <property type="project" value="ARUK-UCL"/>
</dbReference>
<dbReference type="GO" id="GO:1904440">
    <property type="term" value="P:positive regulation of iron ion import across plasma membrane"/>
    <property type="evidence" value="ECO:0000250"/>
    <property type="project" value="ARUK-UCL"/>
</dbReference>
<dbReference type="GO" id="GO:0051044">
    <property type="term" value="P:positive regulation of membrane protein ectodomain proteolysis"/>
    <property type="evidence" value="ECO:0000314"/>
    <property type="project" value="BHF-UCL"/>
</dbReference>
<dbReference type="GO" id="GO:0045348">
    <property type="term" value="P:positive regulation of MHC class II biosynthetic process"/>
    <property type="evidence" value="ECO:0000250"/>
    <property type="project" value="ARUK-UCL"/>
</dbReference>
<dbReference type="GO" id="GO:0050769">
    <property type="term" value="P:positive regulation of neurogenesis"/>
    <property type="evidence" value="ECO:0000316"/>
    <property type="project" value="ARUK-UCL"/>
</dbReference>
<dbReference type="GO" id="GO:0045429">
    <property type="term" value="P:positive regulation of nitric oxide biosynthetic process"/>
    <property type="evidence" value="ECO:0000314"/>
    <property type="project" value="BHF-UCL"/>
</dbReference>
<dbReference type="GO" id="GO:0045672">
    <property type="term" value="P:positive regulation of osteoclast differentiation"/>
    <property type="evidence" value="ECO:0000314"/>
    <property type="project" value="BHF-UCL"/>
</dbReference>
<dbReference type="GO" id="GO:0033141">
    <property type="term" value="P:positive regulation of peptidyl-serine phosphorylation of STAT protein"/>
    <property type="evidence" value="ECO:0000314"/>
    <property type="project" value="MGI"/>
</dbReference>
<dbReference type="GO" id="GO:0050766">
    <property type="term" value="P:positive regulation of phagocytosis"/>
    <property type="evidence" value="ECO:0000250"/>
    <property type="project" value="ARUK-UCL"/>
</dbReference>
<dbReference type="GO" id="GO:0090312">
    <property type="term" value="P:positive regulation of protein deacetylation"/>
    <property type="evidence" value="ECO:0000314"/>
    <property type="project" value="CAFA"/>
</dbReference>
<dbReference type="GO" id="GO:0042307">
    <property type="term" value="P:positive regulation of protein import into nucleus"/>
    <property type="evidence" value="ECO:0000314"/>
    <property type="project" value="CAFA"/>
</dbReference>
<dbReference type="GO" id="GO:1903078">
    <property type="term" value="P:positive regulation of protein localization to plasma membrane"/>
    <property type="evidence" value="ECO:0007005"/>
    <property type="project" value="UniProtKB"/>
</dbReference>
<dbReference type="GO" id="GO:0071902">
    <property type="term" value="P:positive regulation of protein serine/threonine kinase activity"/>
    <property type="evidence" value="ECO:0000314"/>
    <property type="project" value="CAFA"/>
</dbReference>
<dbReference type="GO" id="GO:0031334">
    <property type="term" value="P:positive regulation of protein-containing complex assembly"/>
    <property type="evidence" value="ECO:0000314"/>
    <property type="project" value="CAFA"/>
</dbReference>
<dbReference type="GO" id="GO:0034393">
    <property type="term" value="P:positive regulation of smooth muscle cell apoptotic process"/>
    <property type="evidence" value="ECO:0000314"/>
    <property type="project" value="BHF-UCL"/>
</dbReference>
<dbReference type="GO" id="GO:0045944">
    <property type="term" value="P:positive regulation of transcription by RNA polymerase II"/>
    <property type="evidence" value="ECO:0000250"/>
    <property type="project" value="ARUK-UCL"/>
</dbReference>
<dbReference type="GO" id="GO:2000309">
    <property type="term" value="P:positive regulation of tumor necrosis factor (ligand) superfamily member 11 production"/>
    <property type="evidence" value="ECO:0000314"/>
    <property type="project" value="BHF-UCL"/>
</dbReference>
<dbReference type="GO" id="GO:0032760">
    <property type="term" value="P:positive regulation of tumor necrosis factor production"/>
    <property type="evidence" value="ECO:0000250"/>
    <property type="project" value="ARUK-UCL"/>
</dbReference>
<dbReference type="GO" id="GO:0042531">
    <property type="term" value="P:positive regulation of tyrosine phosphorylation of STAT protein"/>
    <property type="evidence" value="ECO:0000314"/>
    <property type="project" value="MGI"/>
</dbReference>
<dbReference type="GO" id="GO:0060557">
    <property type="term" value="P:positive regulation of vitamin D biosynthetic process"/>
    <property type="evidence" value="ECO:0000314"/>
    <property type="project" value="BHF-UCL"/>
</dbReference>
<dbReference type="GO" id="GO:0050796">
    <property type="term" value="P:regulation of insulin secretion"/>
    <property type="evidence" value="ECO:0000314"/>
    <property type="project" value="BHF-UCL"/>
</dbReference>
<dbReference type="GO" id="GO:0019222">
    <property type="term" value="P:regulation of metabolic process"/>
    <property type="evidence" value="ECO:0000316"/>
    <property type="project" value="ARUK-UCL"/>
</dbReference>
<dbReference type="GO" id="GO:0009615">
    <property type="term" value="P:response to virus"/>
    <property type="evidence" value="ECO:0000314"/>
    <property type="project" value="MGI"/>
</dbReference>
<dbReference type="GO" id="GO:0060333">
    <property type="term" value="P:type II interferon-mediated signaling pathway"/>
    <property type="evidence" value="ECO:0000314"/>
    <property type="project" value="CAFA"/>
</dbReference>
<dbReference type="GO" id="GO:0038196">
    <property type="term" value="P:type III interferon-mediated signaling pathway"/>
    <property type="evidence" value="ECO:0000314"/>
    <property type="project" value="UniProt"/>
</dbReference>
<dbReference type="FunFam" id="1.20.1250.10:FF:000007">
    <property type="entry name" value="Interferon gamma"/>
    <property type="match status" value="1"/>
</dbReference>
<dbReference type="Gene3D" id="1.20.1250.10">
    <property type="match status" value="1"/>
</dbReference>
<dbReference type="InterPro" id="IPR009079">
    <property type="entry name" value="4_helix_cytokine-like_core"/>
</dbReference>
<dbReference type="InterPro" id="IPR002069">
    <property type="entry name" value="Interferon_gamma"/>
</dbReference>
<dbReference type="PANTHER" id="PTHR11419">
    <property type="entry name" value="INTERFERON GAMMA"/>
    <property type="match status" value="1"/>
</dbReference>
<dbReference type="PANTHER" id="PTHR11419:SF0">
    <property type="entry name" value="INTERFERON GAMMA"/>
    <property type="match status" value="1"/>
</dbReference>
<dbReference type="Pfam" id="PF00714">
    <property type="entry name" value="IFN-gamma"/>
    <property type="match status" value="1"/>
</dbReference>
<dbReference type="PIRSF" id="PIRSF001936">
    <property type="entry name" value="IFN-gamma"/>
    <property type="match status" value="1"/>
</dbReference>
<dbReference type="SUPFAM" id="SSF47266">
    <property type="entry name" value="4-helical cytokines"/>
    <property type="match status" value="1"/>
</dbReference>
<proteinExistence type="evidence at protein level"/>
<evidence type="ECO:0000250" key="1">
    <source>
        <dbReference type="UniProtKB" id="P01580"/>
    </source>
</evidence>
<evidence type="ECO:0000256" key="2">
    <source>
        <dbReference type="SAM" id="MobiDB-lite"/>
    </source>
</evidence>
<evidence type="ECO:0000269" key="3">
    <source>
    </source>
</evidence>
<evidence type="ECO:0000269" key="4">
    <source>
    </source>
</evidence>
<evidence type="ECO:0000269" key="5">
    <source>
    </source>
</evidence>
<evidence type="ECO:0000269" key="6">
    <source>
    </source>
</evidence>
<evidence type="ECO:0000269" key="7">
    <source>
    </source>
</evidence>
<evidence type="ECO:0000269" key="8">
    <source>
    </source>
</evidence>
<evidence type="ECO:0000269" key="9">
    <source>
    </source>
</evidence>
<evidence type="ECO:0000269" key="10">
    <source>
    </source>
</evidence>
<evidence type="ECO:0000269" key="11">
    <source>
    </source>
</evidence>
<evidence type="ECO:0000269" key="12">
    <source>
    </source>
</evidence>
<evidence type="ECO:0000269" key="13">
    <source>
    </source>
</evidence>
<evidence type="ECO:0000269" key="14">
    <source>
    </source>
</evidence>
<evidence type="ECO:0000269" key="15">
    <source ref="6"/>
</evidence>
<evidence type="ECO:0000305" key="16"/>
<evidence type="ECO:0007829" key="17">
    <source>
        <dbReference type="PDB" id="1FG9"/>
    </source>
</evidence>
<evidence type="ECO:0007829" key="18">
    <source>
        <dbReference type="PDB" id="1FYH"/>
    </source>
</evidence>
<evidence type="ECO:0007829" key="19">
    <source>
        <dbReference type="PDB" id="3BES"/>
    </source>
</evidence>
<comment type="function">
    <text evidence="1 3 5 10 11 12 13">Type II interferon produced by immune cells such as T-cells and NK cells that plays crucial roles in antimicrobial, antiviral, and antitumor responses by activating effector immune cells and enhancing antigen presentation (PubMed:16914093, PubMed:8666937). Primarily signals through the JAK-STAT pathway after interaction with its receptor IFNGR1 to affect gene regulation (PubMed:8349687). Upon IFNG binding, IFNGR1 intracellular domain opens out to allow association of downstream signaling components JAK2, JAK1 and STAT1, leading to STAT1 activation, nuclear translocation and transcription of IFNG-regulated genes. Many of the induced genes are transcription factors such as IRF1 that are able to further drive regulation of a next wave of transcription (PubMed:16914093). Plays a role in class I antigen presentation pathway by inducing a replacement of catalytic proteasome subunits with immunoproteasome subunits (PubMed:8666937). In turn, increases the quantity, quality, and repertoire of peptides for class I MHC loading (PubMed:8163024). Increases the efficiency of peptide generation also by inducing the expression of activator PA28 that associates with the proteasome and alters its proteolytic cleavage preference (PubMed:11112687). Up-regulates as well MHC II complexes on the cell surface by promoting expression of several key molecules such as cathepsins B/CTSB, H/CTSH, and L/CTSL (PubMed:7729559). Participates in the regulation of hematopoietic stem cells during development and under homeostatic conditions by affecting their development, quiescence, and differentiation (By similarity).</text>
</comment>
<comment type="subunit">
    <text evidence="6 12">Homodimer (PubMed:1902591). Interacts with IFNGR1 (via extracellular domain); this interaction promotes IFNGR1 dimerization (PubMed:8349687).</text>
</comment>
<comment type="interaction">
    <interactant intactId="EBI-1030767">
        <id>P01579</id>
    </interactant>
    <interactant intactId="EBI-1030755">
        <id>P15260</id>
        <label>IFNGR1</label>
    </interactant>
    <organismsDiffer>false</organismsDiffer>
    <experiments>5</experiments>
</comment>
<comment type="interaction">
    <interactant intactId="EBI-1030767">
        <id>P01579</id>
    </interactant>
    <interactant intactId="EBI-15683787">
        <id>Q66793</id>
        <label>C4R</label>
    </interactant>
    <organismsDiffer>true</organismsDiffer>
    <experiments>2</experiments>
</comment>
<comment type="subcellular location">
    <subcellularLocation>
        <location>Secreted</location>
    </subcellularLocation>
</comment>
<comment type="tissue specificity">
    <text>Released primarily from activated T lymphocytes.</text>
</comment>
<comment type="induction">
    <text evidence="14">By cytokines, most notably interleukin IL-12, secreted by professional antigen-presenting cells such as monocytes/macrophages and dendritic cells.</text>
</comment>
<comment type="PTM">
    <text evidence="7">Proteolytic processing produces C-terminal heterogeneity, with proteins ending alternatively at Gly-150, Met-157 or Gly-161.</text>
</comment>
<comment type="disease" evidence="4">
    <disease id="DI-02842">
        <name>Aplastic anemia</name>
        <acronym>AA</acronym>
        <description>A form of anemia in which the bone marrow fails to produce adequate numbers of peripheral blood elements. It is characterized by peripheral pancytopenia and marrow hypoplasia.</description>
        <dbReference type="MIM" id="609135"/>
    </disease>
    <text>Disease susceptibility may be associated with variants affecting the gene represented in this entry.</text>
</comment>
<comment type="disease" evidence="8">
    <disease id="DI-05886">
        <name>Immunodeficiency 69</name>
        <acronym>IMD69</acronym>
        <description>A form of Mendelian susceptibility to mycobacterial disease, a rare condition caused by impairment of interferon-gamma mediated immunity. It is characterized by predisposition to illness caused by moderately virulent mycobacterial species, such as Bacillus Calmette-Guerin (BCG) vaccine, environmental non-tuberculous mycobacteria, and by the more virulent Mycobacterium tuberculosis. Other microorganisms rarely cause severe clinical disease in individuals with susceptibility to mycobacterial infections. Clinical outcome severity depends on the degree of impairment of interferon-gamma mediated immunity. IMD69 is an autosomal recessive disorder manifesting with fever, hepatosplenomegaly, leukocytosis, and thrombocytosis during the acute infection.</description>
        <dbReference type="MIM" id="618963"/>
    </disease>
    <text>The disease is caused by variants affecting the gene represented in this entry.</text>
</comment>
<comment type="pharmaceutical">
    <text>Available under the name Actimmune (Genentech). Used for reducing the frequency and severity of serious infections associated with chronic granulomatous disease (CGD).</text>
</comment>
<comment type="similarity">
    <text evidence="16">Belongs to the type II (or gamma) interferon family.</text>
</comment>
<comment type="online information" name="Wikipedia">
    <link uri="https://en.wikipedia.org/wiki/Interferon_gamma"/>
    <text>Interferon gamma entry</text>
</comment>
<feature type="signal peptide" evidence="7 9">
    <location>
        <begin position="1"/>
        <end position="23"/>
    </location>
</feature>
<feature type="chain" id="PRO_0000016444" description="Interferon gamma">
    <location>
        <begin position="24"/>
        <end position="161"/>
    </location>
</feature>
<feature type="propeptide" id="PRO_0000259481">
    <location>
        <begin position="162"/>
        <end position="166"/>
    </location>
</feature>
<feature type="region of interest" description="Disordered" evidence="2">
    <location>
        <begin position="147"/>
        <end position="166"/>
    </location>
</feature>
<feature type="compositionally biased region" description="Basic residues" evidence="2">
    <location>
        <begin position="149"/>
        <end position="166"/>
    </location>
</feature>
<feature type="modified residue" description="Pyrrolidone carboxylic acid" evidence="7 9">
    <location>
        <position position="24"/>
    </location>
</feature>
<feature type="glycosylation site" description="N-linked (GlcNAc...) asparagine" evidence="9">
    <location>
        <position position="48"/>
    </location>
</feature>
<feature type="glycosylation site" description="N-linked (GlcNAc...) asparagine; in dimeric form" evidence="9">
    <location>
        <position position="120"/>
    </location>
</feature>
<feature type="sequence variant" id="VAR_004017">
    <original>K</original>
    <variation>Q</variation>
    <location>
        <position position="29"/>
    </location>
</feature>
<feature type="sequence variant" id="VAR_004018" description="In dbSNP:rs201359065." evidence="15">
    <original>R</original>
    <variation>Q</variation>
    <location>
        <position position="160"/>
    </location>
</feature>
<feature type="helix" evidence="18">
    <location>
        <begin position="27"/>
        <end position="38"/>
    </location>
</feature>
<feature type="turn" evidence="18">
    <location>
        <begin position="39"/>
        <end position="41"/>
    </location>
</feature>
<feature type="helix" evidence="18">
    <location>
        <begin position="43"/>
        <end position="46"/>
    </location>
</feature>
<feature type="helix" evidence="18">
    <location>
        <begin position="53"/>
        <end position="58"/>
    </location>
</feature>
<feature type="helix" evidence="18">
    <location>
        <begin position="62"/>
        <end position="81"/>
    </location>
</feature>
<feature type="turn" evidence="18">
    <location>
        <begin position="82"/>
        <end position="85"/>
    </location>
</feature>
<feature type="helix" evidence="17">
    <location>
        <begin position="87"/>
        <end position="89"/>
    </location>
</feature>
<feature type="helix" evidence="18">
    <location>
        <begin position="90"/>
        <end position="105"/>
    </location>
</feature>
<feature type="helix" evidence="18">
    <location>
        <begin position="109"/>
        <end position="119"/>
    </location>
</feature>
<feature type="helix" evidence="18">
    <location>
        <begin position="126"/>
        <end position="140"/>
    </location>
</feature>
<feature type="turn" evidence="18">
    <location>
        <begin position="141"/>
        <end position="143"/>
    </location>
</feature>
<feature type="helix" evidence="19">
    <location>
        <begin position="146"/>
        <end position="148"/>
    </location>
</feature>
<reference key="1">
    <citation type="journal article" date="1982" name="Nature">
        <title>Structure of the human immune interferon gene.</title>
        <authorList>
            <person name="Gray P.W."/>
            <person name="Goeddel D.V."/>
        </authorList>
    </citation>
    <scope>NUCLEOTIDE SEQUENCE [GENOMIC DNA]</scope>
</reference>
<reference key="2">
    <citation type="journal article" date="1982" name="Nature">
        <title>Expression of human immune interferon cDNA in E. coli and monkey cells.</title>
        <authorList>
            <person name="Gray P.W."/>
            <person name="Leung D.W."/>
            <person name="Pennica D."/>
            <person name="Yelverton E."/>
            <person name="Najarian R."/>
            <person name="Simonsen C.C."/>
            <person name="Derynck R."/>
            <person name="Sherwood P.J."/>
            <person name="Wallace D.M."/>
            <person name="Berger S.L."/>
            <person name="Levinson A.D."/>
            <person name="Goeddel D.V."/>
        </authorList>
    </citation>
    <scope>NUCLEOTIDE SEQUENCE [MRNA]</scope>
</reference>
<reference key="3">
    <citation type="journal article" date="1985" name="J. Biochem.">
        <title>Cloning and expression of a novel variant of human interferon-gamma cDNA.</title>
        <authorList>
            <person name="Nishi T."/>
            <person name="Fujita T."/>
            <person name="Nishi-Takaoka C."/>
            <person name="Saito A."/>
            <person name="Matsumoto T."/>
            <person name="Sato M."/>
            <person name="Oka T."/>
            <person name="Itoh S."/>
            <person name="Yip Y.K."/>
            <person name="Vilcek J."/>
            <person name="Taniguchi T."/>
        </authorList>
    </citation>
    <scope>NUCLEOTIDE SEQUENCE [MRNA]</scope>
</reference>
<reference key="4">
    <citation type="journal article" date="1982" name="EMBO J.">
        <title>Cloning and structure of the human immune interferon-gamma chromosomal gene.</title>
        <authorList>
            <person name="Taya Y."/>
            <person name="Devos R."/>
            <person name="Tavernier J."/>
            <person name="Cheroutre H."/>
            <person name="Engler G."/>
            <person name="Fiers W."/>
        </authorList>
    </citation>
    <scope>NUCLEOTIDE SEQUENCE [GENOMIC DNA]</scope>
</reference>
<reference key="5">
    <citation type="journal article" date="1982" name="Nucleic Acids Res.">
        <title>Molecular cloning of human immune interferon cDNA and its expression in eukaryotic cells.</title>
        <authorList>
            <person name="Devos R."/>
            <person name="Cheroutre H."/>
            <person name="Taya Y."/>
            <person name="Degrave W."/>
            <person name="van Heuverswyn H."/>
            <person name="Fiers W."/>
        </authorList>
    </citation>
    <scope>NUCLEOTIDE SEQUENCE [MRNA]</scope>
</reference>
<reference key="6">
    <citation type="submission" date="2003-03" db="EMBL/GenBank/DDBJ databases">
        <authorList>
            <person name="Chikara S.K."/>
            <person name="Jaiswal P."/>
            <person name="Sharma G."/>
        </authorList>
    </citation>
    <scope>NUCLEOTIDE SEQUENCE [MRNA]</scope>
    <scope>VARIANT GLN-160</scope>
</reference>
<reference key="7">
    <citation type="submission" date="2001-06" db="EMBL/GenBank/DDBJ databases">
        <authorList>
            <consortium name="SeattleSNPs variation discovery resource"/>
        </authorList>
    </citation>
    <scope>NUCLEOTIDE SEQUENCE [GENOMIC DNA]</scope>
</reference>
<reference key="8">
    <citation type="journal article" date="2008" name="Nat. Methods">
        <title>Human protein factory for converting the transcriptome into an in vitro-expressed proteome.</title>
        <authorList>
            <person name="Goshima N."/>
            <person name="Kawamura Y."/>
            <person name="Fukumoto A."/>
            <person name="Miura A."/>
            <person name="Honma R."/>
            <person name="Satoh R."/>
            <person name="Wakamatsu A."/>
            <person name="Yamamoto J."/>
            <person name="Kimura K."/>
            <person name="Nishikawa T."/>
            <person name="Andoh T."/>
            <person name="Iida Y."/>
            <person name="Ishikawa K."/>
            <person name="Ito E."/>
            <person name="Kagawa N."/>
            <person name="Kaminaga C."/>
            <person name="Kanehori K."/>
            <person name="Kawakami B."/>
            <person name="Kenmochi K."/>
            <person name="Kimura R."/>
            <person name="Kobayashi M."/>
            <person name="Kuroita T."/>
            <person name="Kuwayama H."/>
            <person name="Maruyama Y."/>
            <person name="Matsuo K."/>
            <person name="Minami K."/>
            <person name="Mitsubori M."/>
            <person name="Mori M."/>
            <person name="Morishita R."/>
            <person name="Murase A."/>
            <person name="Nishikawa A."/>
            <person name="Nishikawa S."/>
            <person name="Okamoto T."/>
            <person name="Sakagami N."/>
            <person name="Sakamoto Y."/>
            <person name="Sasaki Y."/>
            <person name="Seki T."/>
            <person name="Sono S."/>
            <person name="Sugiyama A."/>
            <person name="Sumiya T."/>
            <person name="Takayama T."/>
            <person name="Takayama Y."/>
            <person name="Takeda H."/>
            <person name="Togashi T."/>
            <person name="Yahata K."/>
            <person name="Yamada H."/>
            <person name="Yanagisawa Y."/>
            <person name="Endo Y."/>
            <person name="Imamoto F."/>
            <person name="Kisu Y."/>
            <person name="Tanaka S."/>
            <person name="Isogai T."/>
            <person name="Imai J."/>
            <person name="Watanabe S."/>
            <person name="Nomura N."/>
        </authorList>
    </citation>
    <scope>NUCLEOTIDE SEQUENCE [LARGE SCALE MRNA]</scope>
</reference>
<reference key="9">
    <citation type="submission" date="2005-07" db="EMBL/GenBank/DDBJ databases">
        <authorList>
            <person name="Mural R.J."/>
            <person name="Istrail S."/>
            <person name="Sutton G.G."/>
            <person name="Florea L."/>
            <person name="Halpern A.L."/>
            <person name="Mobarry C.M."/>
            <person name="Lippert R."/>
            <person name="Walenz B."/>
            <person name="Shatkay H."/>
            <person name="Dew I."/>
            <person name="Miller J.R."/>
            <person name="Flanigan M.J."/>
            <person name="Edwards N.J."/>
            <person name="Bolanos R."/>
            <person name="Fasulo D."/>
            <person name="Halldorsson B.V."/>
            <person name="Hannenhalli S."/>
            <person name="Turner R."/>
            <person name="Yooseph S."/>
            <person name="Lu F."/>
            <person name="Nusskern D.R."/>
            <person name="Shue B.C."/>
            <person name="Zheng X.H."/>
            <person name="Zhong F."/>
            <person name="Delcher A.L."/>
            <person name="Huson D.H."/>
            <person name="Kravitz S.A."/>
            <person name="Mouchard L."/>
            <person name="Reinert K."/>
            <person name="Remington K.A."/>
            <person name="Clark A.G."/>
            <person name="Waterman M.S."/>
            <person name="Eichler E.E."/>
            <person name="Adams M.D."/>
            <person name="Hunkapiller M.W."/>
            <person name="Myers E.W."/>
            <person name="Venter J.C."/>
        </authorList>
    </citation>
    <scope>NUCLEOTIDE SEQUENCE [LARGE SCALE GENOMIC DNA]</scope>
</reference>
<reference key="10">
    <citation type="journal article" date="2004" name="Genome Res.">
        <title>The status, quality, and expansion of the NIH full-length cDNA project: the Mammalian Gene Collection (MGC).</title>
        <authorList>
            <consortium name="The MGC Project Team"/>
        </authorList>
    </citation>
    <scope>NUCLEOTIDE SEQUENCE [LARGE SCALE MRNA]</scope>
    <source>
        <tissue>Blood</tissue>
    </source>
</reference>
<reference key="11">
    <citation type="journal article" date="1984" name="J. Biol. Chem.">
        <title>Natural human interferon-gamma. Complete amino acid sequence and determination of sites of glycosylation.</title>
        <authorList>
            <person name="Rinderknecht E."/>
            <person name="O'Conner B.H."/>
            <person name="Rodriguez H."/>
        </authorList>
    </citation>
    <scope>PROTEIN SEQUENCE OF 24-157</scope>
    <scope>PYROGLUTAMATE FORMATION AT GLN-24</scope>
    <scope>GLYCOSYLATION AT ASN-48 AND ASN-120</scope>
</reference>
<reference key="12">
    <citation type="journal article" date="1987" name="Eur. J. Biochem.">
        <title>Structural characterization of human interferon gamma. Heterogeneity of the carboxyl terminus.</title>
        <authorList>
            <person name="Pan Y.C.E."/>
            <person name="Stern A.S."/>
            <person name="Familletti P.C."/>
            <person name="Khan F.R."/>
            <person name="Chizzonite R."/>
        </authorList>
    </citation>
    <scope>PROTEIN SEQUENCE OF 24-161</scope>
    <scope>PYROGLUTAMATE FORMATION AT GLN-24</scope>
    <scope>PROTEOLYTIC PROCESSING OF THE C-TERMINUS</scope>
</reference>
<reference key="13">
    <citation type="journal article" date="1989" name="J. Biochem.">
        <title>Studies on the sugar chains of interferon-gamma from human peripheral-blood lymphocytes.</title>
        <authorList>
            <person name="Yamamoto S."/>
            <person name="Hase S."/>
            <person name="Yamauchi H."/>
            <person name="Tanimoto T."/>
            <person name="Ikenaka T."/>
        </authorList>
    </citation>
    <scope>STRUCTURE OF CARBOHYDRATES</scope>
</reference>
<reference key="14">
    <citation type="journal article" date="1993" name="J. Biol. Chem.">
        <title>Interferon-gamma induces receptor dimerization in solution and on cells.</title>
        <authorList>
            <person name="Greenlund A.C."/>
            <person name="Schreiber R.D."/>
            <person name="Goeddel D.V."/>
            <person name="Pennica D."/>
        </authorList>
    </citation>
    <scope>INTERACTION WITH IFNGR1</scope>
    <scope>FUNCTION</scope>
</reference>
<reference key="15">
    <citation type="journal article" date="1994" name="FEBS Lett.">
        <title>Replacement of proteasome subunits X and Y by LMP7 and LMP2 induced by interferon-gamma for acquirement of the functional diversity responsible for antigen processing.</title>
        <authorList>
            <person name="Akiyama K."/>
            <person name="Kagawa S."/>
            <person name="Tamura T."/>
            <person name="Shimbara N."/>
            <person name="Takashina M."/>
            <person name="Kristensen P."/>
            <person name="Hendil K.B."/>
            <person name="Tanaka K."/>
            <person name="Ichihara A."/>
        </authorList>
    </citation>
    <scope>FUNCTION IN IMMUNOPROTEASOME EXPRESSION</scope>
</reference>
<reference key="16">
    <citation type="journal article" date="1995" name="FEBS Lett.">
        <title>Gamma-interferon causes a selective induction of the lysosomal proteases, cathepsins B and L, in macrophages.</title>
        <authorList>
            <person name="Lah T.T."/>
            <person name="Hawley M."/>
            <person name="Rock K.L."/>
            <person name="Goldberg A.L."/>
        </authorList>
    </citation>
    <scope>FUNCTION IN CATHEPSIN EXPRESSION</scope>
</reference>
<reference key="17">
    <citation type="journal article" date="1996" name="J. Exp. Med.">
        <title>Newly identified pair of proteasomal subunits regulated reciprocally by interferon gamma.</title>
        <authorList>
            <person name="Hisamatsu H."/>
            <person name="Shimbara N."/>
            <person name="Saito Y."/>
            <person name="Kristensen P."/>
            <person name="Hendil K.B."/>
            <person name="Fujiwara T."/>
            <person name="Takahashi E."/>
            <person name="Tanahashi N."/>
            <person name="Tamura T."/>
            <person name="Ichihara A."/>
            <person name="Tanaka K."/>
        </authorList>
    </citation>
    <scope>FUNCTION IN IMMUNOPROTEASOME EXPRESSION</scope>
</reference>
<reference key="18">
    <citation type="journal article" date="1998" name="Leuk. Lymphoma">
        <title>The regulation and biological activity of interleukin 12.</title>
        <authorList>
            <person name="Lee S.M."/>
            <person name="Suen Y."/>
            <person name="Qian J."/>
            <person name="Knoppel E."/>
            <person name="Cairo M.S."/>
        </authorList>
    </citation>
    <scope>INDUCTION BY INTERLEUKIN 12</scope>
</reference>
<reference key="19">
    <citation type="journal article" date="2001" name="J. Cell Sci.">
        <title>Interferon gamma regulates accumulation of the proteasome activator PA28 and immunoproteasomes at nuclear PML bodies.</title>
        <authorList>
            <person name="Fabunmi R.P."/>
            <person name="Wigley W.C."/>
            <person name="Thomas P.J."/>
            <person name="DeMartino G.N."/>
        </authorList>
    </citation>
    <scope>FUNCTION</scope>
</reference>
<reference key="20">
    <citation type="journal article" date="2006" name="Cell. Mol. Biol.">
        <title>Arsenic enhances the apoptosis induced by interferon gamma: key role of IRF-1.</title>
        <authorList>
            <person name="El Bougrini J."/>
            <person name="Pampin M."/>
            <person name="Chelbi-Alix M.K."/>
        </authorList>
    </citation>
    <scope>FUNCTION</scope>
</reference>
<reference key="21">
    <citation type="journal article" date="2020" name="J. Clin. Invest.">
        <title>Inherited human IFN-gamma deficiency underlies mycobacterial disease.</title>
        <authorList>
            <person name="Kerner G."/>
            <person name="Rosain J."/>
            <person name="Guerin A."/>
            <person name="Al-Khabaz A."/>
            <person name="Oleaga-Quintas C."/>
            <person name="Rapaport F."/>
            <person name="Massaad M.J."/>
            <person name="Ding J.Y."/>
            <person name="Khan T."/>
            <person name="Ali F.A."/>
            <person name="Rahman M."/>
            <person name="Deswarte C."/>
            <person name="Martinez-Barricarte R."/>
            <person name="Geha R.S."/>
            <person name="Jeanne-Julien V."/>
            <person name="Garcia D."/>
            <person name="Chi C.Y."/>
            <person name="Yang R."/>
            <person name="Roynard M."/>
            <person name="Fleckenstein B."/>
            <person name="Rozenberg F."/>
            <person name="Boisson-Dupuis S."/>
            <person name="Ku C.L."/>
            <person name="Seeleuthner Y."/>
            <person name="Beziat V."/>
            <person name="Marr N."/>
            <person name="Abel L."/>
            <person name="Al-Herz W."/>
            <person name="Casanova J.L."/>
            <person name="Bustamante J."/>
        </authorList>
    </citation>
    <scope>INVOLVEMENT IN IMD69</scope>
</reference>
<reference key="22">
    <citation type="journal article" date="1991" name="Science">
        <title>Three-dimensional structure of recombinant human interferon-gamma.</title>
        <authorList>
            <person name="Ealick S.E."/>
            <person name="Cook W.J."/>
            <person name="Vijay-Kumar S."/>
            <person name="Carson M."/>
            <person name="Nagabhushan T.L."/>
            <person name="Trotta P.P."/>
            <person name="Bugg C.E."/>
        </authorList>
    </citation>
    <scope>X-RAY CRYSTALLOGRAPHY (3.5 ANGSTROMS)</scope>
    <scope>SUBUNIT</scope>
</reference>
<reference key="23">
    <citation type="journal article" date="1995" name="Nature">
        <title>Crystal structure of a complex between interferon-gamma and its soluble high-affinity receptor.</title>
        <authorList>
            <person name="Walter M.R."/>
            <person name="Windsor W.T."/>
            <person name="Nagabhushan T.L."/>
            <person name="Lundell D.J."/>
            <person name="Lunn C.A."/>
            <person name="Zauodny P.J."/>
            <person name="Narula S.K."/>
        </authorList>
    </citation>
    <scope>X-RAY CRYSTALLOGRAPHY (2.9 ANGSTROMS)</scope>
</reference>
<reference key="24">
    <citation type="journal article" date="2000" name="J. Mol. Biol.">
        <title>Design, characterization, and structure of a biologically active single-chain mutant of human IFN-gamma.</title>
        <authorList>
            <person name="Landar A."/>
            <person name="Curry B."/>
            <person name="Parker M.H."/>
            <person name="DiGiacomo R."/>
            <person name="Indelicato S.R."/>
            <person name="Nagabhushan T.L."/>
            <person name="Rizzi G."/>
            <person name="Walter M.R."/>
        </authorList>
    </citation>
    <scope>X-RAY CRYSTALLOGRAPHY (2.9 ANGSTROMS)</scope>
</reference>
<reference key="25">
    <citation type="journal article" date="2000" name="Structure">
        <title>Observation of an unexpected third receptor molecule in the crystal structure of human interferon-gamma receptor complex.</title>
        <authorList>
            <person name="Thiel D.J."/>
            <person name="le Du M.-H."/>
            <person name="Walter R.L."/>
            <person name="D'Arcy A."/>
            <person name="Chene C."/>
            <person name="Fountoulakis M."/>
            <person name="Garotta G."/>
            <person name="Winkler F.K."/>
            <person name="Ealick S.E."/>
        </authorList>
    </citation>
    <scope>X-RAY CRYSTALLOGRAPHY (2.9 ANGSTROMS) OF COMPLEX WITH RECEPTOR</scope>
</reference>
<reference key="26">
    <citation type="journal article" date="1992" name="Biochemistry">
        <title>1H, 13C, and 15N NMR backbone assignments and secondary structure of human interferon-gamma.</title>
        <authorList>
            <person name="Grzesiek S."/>
            <person name="Doebeli H."/>
            <person name="Gentz R."/>
            <person name="Garotta G."/>
            <person name="Labhardt A.M."/>
            <person name="Bax A."/>
        </authorList>
    </citation>
    <scope>STRUCTURE BY NMR</scope>
</reference>
<reference key="27">
    <citation type="journal article" date="2004" name="Br. J. Haematol.">
        <title>Homozygosis for (12) CA repeats in the first intron of the human IFN-gamma gene is significantly associated with the risk of aplastic anaemia in Caucasian population.</title>
        <authorList>
            <person name="Dufour C."/>
            <person name="Capasso M."/>
            <person name="Svahn J."/>
            <person name="Marrone A."/>
            <person name="Haupt R."/>
            <person name="Bacigalupo A."/>
            <person name="Giordani L."/>
            <person name="Longoni D."/>
            <person name="Pillon M."/>
            <person name="Pistorio A."/>
            <person name="Di Michele P."/>
            <person name="Iori A.P."/>
            <person name="Pongiglione C."/>
            <person name="Lanciotti M."/>
            <person name="Iolascon A."/>
        </authorList>
    </citation>
    <scope>ASSOCIATION WITH APLASTIC ANEMIA</scope>
</reference>
<sequence>MKYTSYILAFQLCIVLGSLGCYCQDPYVKEAENLKKYFNAGHSDVADNGTLFLGILKNWKEESDRKIMQSQIVSFYFKLFKNFKDDQSIQKSVETIKEDMNVKFFNSNKKKRDDFEKLTNYSVTDLNVQRKAIHELIQVMAELSPAAKTGKRKRSQMLFRGRRASQ</sequence>